<sequence>MVTEWKNFFKGCCMQLLNVGFGNTVMVGRVVAVVNTGSSPARKIREIAKKNGKLIDVTEGRRTRSMLVMDSNHVVLSSVQSDTISQRLQAMRIDLQLGECREQGKKVYNENE</sequence>
<feature type="chain" id="PRO_0000050229" description="Putative regulatory protein DP2861">
    <location>
        <begin position="1"/>
        <end position="112"/>
    </location>
</feature>
<gene>
    <name type="ordered locus">DP2861</name>
</gene>
<accession>Q6AJ90</accession>
<comment type="similarity">
    <text evidence="1">Belongs to the RemA family.</text>
</comment>
<keyword id="KW-1185">Reference proteome</keyword>
<evidence type="ECO:0000255" key="1">
    <source>
        <dbReference type="HAMAP-Rule" id="MF_01503"/>
    </source>
</evidence>
<proteinExistence type="inferred from homology"/>
<name>Y2861_DESPS</name>
<reference key="1">
    <citation type="journal article" date="2004" name="Environ. Microbiol.">
        <title>The genome of Desulfotalea psychrophila, a sulfate-reducing bacterium from permanently cold Arctic sediments.</title>
        <authorList>
            <person name="Rabus R."/>
            <person name="Ruepp A."/>
            <person name="Frickey T."/>
            <person name="Rattei T."/>
            <person name="Fartmann B."/>
            <person name="Stark M."/>
            <person name="Bauer M."/>
            <person name="Zibat A."/>
            <person name="Lombardot T."/>
            <person name="Becker I."/>
            <person name="Amann J."/>
            <person name="Gellner K."/>
            <person name="Teeling H."/>
            <person name="Leuschner W.D."/>
            <person name="Gloeckner F.-O."/>
            <person name="Lupas A.N."/>
            <person name="Amann R."/>
            <person name="Klenk H.-P."/>
        </authorList>
    </citation>
    <scope>NUCLEOTIDE SEQUENCE [LARGE SCALE GENOMIC DNA]</scope>
    <source>
        <strain>DSM 12343 / LSv54</strain>
    </source>
</reference>
<organism>
    <name type="scientific">Desulfotalea psychrophila (strain LSv54 / DSM 12343)</name>
    <dbReference type="NCBI Taxonomy" id="177439"/>
    <lineage>
        <taxon>Bacteria</taxon>
        <taxon>Pseudomonadati</taxon>
        <taxon>Thermodesulfobacteriota</taxon>
        <taxon>Desulfobulbia</taxon>
        <taxon>Desulfobulbales</taxon>
        <taxon>Desulfocapsaceae</taxon>
        <taxon>Desulfotalea</taxon>
    </lineage>
</organism>
<dbReference type="EMBL" id="CR522870">
    <property type="protein sequence ID" value="CAG37590.1"/>
    <property type="molecule type" value="Genomic_DNA"/>
</dbReference>
<dbReference type="SMR" id="Q6AJ90"/>
<dbReference type="STRING" id="177439.DP2861"/>
<dbReference type="KEGG" id="dps:DP2861"/>
<dbReference type="eggNOG" id="COG2052">
    <property type="taxonomic scope" value="Bacteria"/>
</dbReference>
<dbReference type="HOGENOM" id="CLU_165326_1_0_7"/>
<dbReference type="Proteomes" id="UP000000602">
    <property type="component" value="Chromosome"/>
</dbReference>
<dbReference type="HAMAP" id="MF_01503">
    <property type="entry name" value="RemA"/>
    <property type="match status" value="1"/>
</dbReference>
<dbReference type="InterPro" id="IPR007169">
    <property type="entry name" value="RemA-like"/>
</dbReference>
<dbReference type="NCBIfam" id="NF003315">
    <property type="entry name" value="PRK04323.1"/>
    <property type="match status" value="1"/>
</dbReference>
<dbReference type="PANTHER" id="PTHR38449:SF1">
    <property type="entry name" value="REGULATORY PROTEIN SSL2874-RELATED"/>
    <property type="match status" value="1"/>
</dbReference>
<dbReference type="PANTHER" id="PTHR38449">
    <property type="entry name" value="REGULATORY PROTEIN TM_1690-RELATED"/>
    <property type="match status" value="1"/>
</dbReference>
<dbReference type="Pfam" id="PF04025">
    <property type="entry name" value="RemA-like"/>
    <property type="match status" value="1"/>
</dbReference>
<protein>
    <recommendedName>
        <fullName evidence="1">Putative regulatory protein DP2861</fullName>
    </recommendedName>
</protein>